<gene>
    <name evidence="1" type="primary">uppP</name>
    <name type="ordered locus">DNO_0291</name>
</gene>
<dbReference type="EC" id="3.6.1.27" evidence="1"/>
<dbReference type="EMBL" id="CP000513">
    <property type="protein sequence ID" value="ABQ13612.1"/>
    <property type="molecule type" value="Genomic_DNA"/>
</dbReference>
<dbReference type="RefSeq" id="WP_012030635.1">
    <property type="nucleotide sequence ID" value="NC_009446.1"/>
</dbReference>
<dbReference type="SMR" id="A5EW93"/>
<dbReference type="STRING" id="246195.DNO_0291"/>
<dbReference type="KEGG" id="dno:DNO_0291"/>
<dbReference type="eggNOG" id="COG1968">
    <property type="taxonomic scope" value="Bacteria"/>
</dbReference>
<dbReference type="HOGENOM" id="CLU_060296_1_0_6"/>
<dbReference type="OrthoDB" id="9808289at2"/>
<dbReference type="Proteomes" id="UP000000248">
    <property type="component" value="Chromosome"/>
</dbReference>
<dbReference type="GO" id="GO:0005886">
    <property type="term" value="C:plasma membrane"/>
    <property type="evidence" value="ECO:0007669"/>
    <property type="project" value="UniProtKB-SubCell"/>
</dbReference>
<dbReference type="GO" id="GO:0050380">
    <property type="term" value="F:undecaprenyl-diphosphatase activity"/>
    <property type="evidence" value="ECO:0007669"/>
    <property type="project" value="UniProtKB-UniRule"/>
</dbReference>
<dbReference type="GO" id="GO:0071555">
    <property type="term" value="P:cell wall organization"/>
    <property type="evidence" value="ECO:0007669"/>
    <property type="project" value="UniProtKB-KW"/>
</dbReference>
<dbReference type="GO" id="GO:0009252">
    <property type="term" value="P:peptidoglycan biosynthetic process"/>
    <property type="evidence" value="ECO:0007669"/>
    <property type="project" value="UniProtKB-KW"/>
</dbReference>
<dbReference type="GO" id="GO:0008360">
    <property type="term" value="P:regulation of cell shape"/>
    <property type="evidence" value="ECO:0007669"/>
    <property type="project" value="UniProtKB-KW"/>
</dbReference>
<dbReference type="GO" id="GO:0046677">
    <property type="term" value="P:response to antibiotic"/>
    <property type="evidence" value="ECO:0007669"/>
    <property type="project" value="UniProtKB-UniRule"/>
</dbReference>
<dbReference type="HAMAP" id="MF_01006">
    <property type="entry name" value="Undec_diphosphatase"/>
    <property type="match status" value="1"/>
</dbReference>
<dbReference type="InterPro" id="IPR003824">
    <property type="entry name" value="UppP"/>
</dbReference>
<dbReference type="NCBIfam" id="NF001393">
    <property type="entry name" value="PRK00281.2-4"/>
    <property type="match status" value="1"/>
</dbReference>
<dbReference type="NCBIfam" id="TIGR00753">
    <property type="entry name" value="undec_PP_bacA"/>
    <property type="match status" value="1"/>
</dbReference>
<dbReference type="PANTHER" id="PTHR30622">
    <property type="entry name" value="UNDECAPRENYL-DIPHOSPHATASE"/>
    <property type="match status" value="1"/>
</dbReference>
<dbReference type="PANTHER" id="PTHR30622:SF4">
    <property type="entry name" value="UNDECAPRENYL-DIPHOSPHATASE"/>
    <property type="match status" value="1"/>
</dbReference>
<dbReference type="Pfam" id="PF02673">
    <property type="entry name" value="BacA"/>
    <property type="match status" value="1"/>
</dbReference>
<protein>
    <recommendedName>
        <fullName evidence="1">Undecaprenyl-diphosphatase</fullName>
        <ecNumber evidence="1">3.6.1.27</ecNumber>
    </recommendedName>
    <alternativeName>
        <fullName evidence="1">Bacitracin resistance protein</fullName>
    </alternativeName>
    <alternativeName>
        <fullName evidence="1">Undecaprenyl pyrophosphate phosphatase</fullName>
    </alternativeName>
</protein>
<accession>A5EW93</accession>
<comment type="function">
    <text evidence="1">Catalyzes the dephosphorylation of undecaprenyl diphosphate (UPP). Confers resistance to bacitracin.</text>
</comment>
<comment type="catalytic activity">
    <reaction evidence="1">
        <text>di-trans,octa-cis-undecaprenyl diphosphate + H2O = di-trans,octa-cis-undecaprenyl phosphate + phosphate + H(+)</text>
        <dbReference type="Rhea" id="RHEA:28094"/>
        <dbReference type="ChEBI" id="CHEBI:15377"/>
        <dbReference type="ChEBI" id="CHEBI:15378"/>
        <dbReference type="ChEBI" id="CHEBI:43474"/>
        <dbReference type="ChEBI" id="CHEBI:58405"/>
        <dbReference type="ChEBI" id="CHEBI:60392"/>
        <dbReference type="EC" id="3.6.1.27"/>
    </reaction>
</comment>
<comment type="subcellular location">
    <subcellularLocation>
        <location evidence="1">Cell inner membrane</location>
        <topology evidence="1">Multi-pass membrane protein</topology>
    </subcellularLocation>
</comment>
<comment type="miscellaneous">
    <text>Bacitracin is thought to be involved in the inhibition of peptidoglycan synthesis by sequestering undecaprenyl diphosphate, thereby reducing the pool of lipid carrier available.</text>
</comment>
<comment type="similarity">
    <text evidence="1">Belongs to the UppP family.</text>
</comment>
<keyword id="KW-0046">Antibiotic resistance</keyword>
<keyword id="KW-0997">Cell inner membrane</keyword>
<keyword id="KW-1003">Cell membrane</keyword>
<keyword id="KW-0133">Cell shape</keyword>
<keyword id="KW-0961">Cell wall biogenesis/degradation</keyword>
<keyword id="KW-0378">Hydrolase</keyword>
<keyword id="KW-0472">Membrane</keyword>
<keyword id="KW-0573">Peptidoglycan synthesis</keyword>
<keyword id="KW-1185">Reference proteome</keyword>
<keyword id="KW-0812">Transmembrane</keyword>
<keyword id="KW-1133">Transmembrane helix</keyword>
<evidence type="ECO:0000255" key="1">
    <source>
        <dbReference type="HAMAP-Rule" id="MF_01006"/>
    </source>
</evidence>
<proteinExistence type="inferred from homology"/>
<organism>
    <name type="scientific">Dichelobacter nodosus (strain VCS1703A)</name>
    <dbReference type="NCBI Taxonomy" id="246195"/>
    <lineage>
        <taxon>Bacteria</taxon>
        <taxon>Pseudomonadati</taxon>
        <taxon>Pseudomonadota</taxon>
        <taxon>Gammaproteobacteria</taxon>
        <taxon>Cardiobacteriales</taxon>
        <taxon>Cardiobacteriaceae</taxon>
        <taxon>Dichelobacter</taxon>
    </lineage>
</organism>
<name>UPPP_DICNV</name>
<sequence>MTLWQAFILSLIQGITEFLPISSSGHLVITRELLHWQDAGVAFDAFTGLGTLTAVLFYYRKDVCSILYHWFRQFRHCDAPPAPEAKLGNQLIVATLPALLIGFMVKDHIDALTHRPLLIASTTMIFAIFLAAADFWGRKKLSLPETNYRQAFYYGLAQTLALVPGVSRSGITLTAGLAMHFSRESAARFSFLQSIPISAAAGGYGLWKLATNPSDFSWQLIALSYVTATLAAYVCIALFIRFLNTVGMMPHVIYRLLLGAYLFFVFM</sequence>
<feature type="chain" id="PRO_0000303026" description="Undecaprenyl-diphosphatase">
    <location>
        <begin position="1"/>
        <end position="267"/>
    </location>
</feature>
<feature type="transmembrane region" description="Helical" evidence="1">
    <location>
        <begin position="1"/>
        <end position="21"/>
    </location>
</feature>
<feature type="transmembrane region" description="Helical" evidence="1">
    <location>
        <begin position="39"/>
        <end position="59"/>
    </location>
</feature>
<feature type="transmembrane region" description="Helical" evidence="1">
    <location>
        <begin position="85"/>
        <end position="105"/>
    </location>
</feature>
<feature type="transmembrane region" description="Helical" evidence="1">
    <location>
        <begin position="117"/>
        <end position="137"/>
    </location>
</feature>
<feature type="transmembrane region" description="Helical" evidence="1">
    <location>
        <begin position="189"/>
        <end position="209"/>
    </location>
</feature>
<feature type="transmembrane region" description="Helical" evidence="1">
    <location>
        <begin position="220"/>
        <end position="240"/>
    </location>
</feature>
<feature type="transmembrane region" description="Helical" evidence="1">
    <location>
        <begin position="246"/>
        <end position="266"/>
    </location>
</feature>
<reference key="1">
    <citation type="journal article" date="2007" name="Nat. Biotechnol.">
        <title>Genome sequence and identification of candidate vaccine antigens from the animal pathogen Dichelobacter nodosus.</title>
        <authorList>
            <person name="Myers G.S.A."/>
            <person name="Parker D."/>
            <person name="Al-Hasani K."/>
            <person name="Kennan R.M."/>
            <person name="Seemann T."/>
            <person name="Ren Q."/>
            <person name="Badger J.H."/>
            <person name="Selengut J.D."/>
            <person name="Deboy R.T."/>
            <person name="Tettelin H."/>
            <person name="Boyce J.D."/>
            <person name="McCarl V.P."/>
            <person name="Han X."/>
            <person name="Nelson W.C."/>
            <person name="Madupu R."/>
            <person name="Mohamoud Y."/>
            <person name="Holley T."/>
            <person name="Fedorova N."/>
            <person name="Khouri H."/>
            <person name="Bottomley S.P."/>
            <person name="Whittington R.J."/>
            <person name="Adler B."/>
            <person name="Songer J.G."/>
            <person name="Rood J.I."/>
            <person name="Paulsen I.T."/>
        </authorList>
    </citation>
    <scope>NUCLEOTIDE SEQUENCE [LARGE SCALE GENOMIC DNA]</scope>
    <source>
        <strain>VCS1703A</strain>
    </source>
</reference>